<dbReference type="EC" id="3.2.1.1" evidence="2"/>
<dbReference type="EMBL" id="K02638">
    <property type="protein sequence ID" value="AAA32933.1"/>
    <property type="molecule type" value="mRNA"/>
</dbReference>
<dbReference type="SMR" id="P04747"/>
<dbReference type="CAZy" id="GH13">
    <property type="family name" value="Glycoside Hydrolase Family 13"/>
</dbReference>
<dbReference type="ExpressionAtlas" id="P04747">
    <property type="expression patterns" value="baseline"/>
</dbReference>
<dbReference type="GO" id="GO:0004556">
    <property type="term" value="F:alpha-amylase activity"/>
    <property type="evidence" value="ECO:0007669"/>
    <property type="project" value="UniProtKB-EC"/>
</dbReference>
<dbReference type="GO" id="GO:0046872">
    <property type="term" value="F:metal ion binding"/>
    <property type="evidence" value="ECO:0007669"/>
    <property type="project" value="UniProtKB-KW"/>
</dbReference>
<dbReference type="GO" id="GO:0005975">
    <property type="term" value="P:carbohydrate metabolic process"/>
    <property type="evidence" value="ECO:0007669"/>
    <property type="project" value="InterPro"/>
</dbReference>
<dbReference type="CDD" id="cd11314">
    <property type="entry name" value="AmyAc_arch_bac_plant_AmyA"/>
    <property type="match status" value="1"/>
</dbReference>
<dbReference type="Gene3D" id="3.20.20.80">
    <property type="entry name" value="Glycosidases"/>
    <property type="match status" value="1"/>
</dbReference>
<dbReference type="InterPro" id="IPR006046">
    <property type="entry name" value="Alpha_amylase"/>
</dbReference>
<dbReference type="InterPro" id="IPR006047">
    <property type="entry name" value="Glyco_hydro_13_cat_dom"/>
</dbReference>
<dbReference type="InterPro" id="IPR017853">
    <property type="entry name" value="Glycoside_hydrolase_SF"/>
</dbReference>
<dbReference type="PANTHER" id="PTHR43447">
    <property type="entry name" value="ALPHA-AMYLASE"/>
    <property type="match status" value="1"/>
</dbReference>
<dbReference type="Pfam" id="PF00128">
    <property type="entry name" value="Alpha-amylase"/>
    <property type="match status" value="1"/>
</dbReference>
<dbReference type="PRINTS" id="PR00110">
    <property type="entry name" value="ALPHAAMYLASE"/>
</dbReference>
<dbReference type="SMART" id="SM00642">
    <property type="entry name" value="Aamy"/>
    <property type="match status" value="1"/>
</dbReference>
<dbReference type="SUPFAM" id="SSF51445">
    <property type="entry name" value="(Trans)glycosidases"/>
    <property type="match status" value="1"/>
</dbReference>
<evidence type="ECO:0000250" key="1"/>
<evidence type="ECO:0000250" key="2">
    <source>
        <dbReference type="UniProtKB" id="P00693"/>
    </source>
</evidence>
<evidence type="ECO:0000250" key="3">
    <source>
        <dbReference type="UniProtKB" id="P04063"/>
    </source>
</evidence>
<evidence type="ECO:0000305" key="4"/>
<proteinExistence type="evidence at transcript level"/>
<name>AMY3_HORVU</name>
<gene>
    <name type="primary">AMY1.3</name>
</gene>
<protein>
    <recommendedName>
        <fullName>Alpha-amylase type B isozyme</fullName>
        <ecNumber evidence="2">3.2.1.1</ecNumber>
    </recommendedName>
    <alternativeName>
        <fullName>1,4-alpha-D-glucan glucanohydrolase</fullName>
    </alternativeName>
    <alternativeName>
        <fullName>Clone PHV19</fullName>
    </alternativeName>
</protein>
<feature type="signal peptide">
    <location>
        <begin position="1"/>
        <end position="24"/>
    </location>
</feature>
<feature type="chain" id="PRO_0000001406" description="Alpha-amylase type B isozyme">
    <location>
        <begin position="25"/>
        <end position="368" status="greater than"/>
    </location>
</feature>
<feature type="active site" description="Nucleophile" evidence="3">
    <location>
        <position position="203"/>
    </location>
</feature>
<feature type="active site" description="Proton donor" evidence="3">
    <location>
        <position position="228"/>
    </location>
</feature>
<feature type="binding site" evidence="3">
    <location>
        <begin position="75"/>
        <end position="76"/>
    </location>
    <ligand>
        <name>substrate</name>
    </ligand>
</feature>
<feature type="binding site" evidence="3">
    <location>
        <position position="115"/>
    </location>
    <ligand>
        <name>Ca(2+)</name>
        <dbReference type="ChEBI" id="CHEBI:29108"/>
        <label>1</label>
    </ligand>
</feature>
<feature type="binding site" evidence="3">
    <location>
        <position position="132"/>
    </location>
    <ligand>
        <name>Ca(2+)</name>
        <dbReference type="ChEBI" id="CHEBI:29108"/>
        <label>2</label>
    </ligand>
</feature>
<feature type="binding site" evidence="3">
    <location>
        <position position="135"/>
    </location>
    <ligand>
        <name>Ca(2+)</name>
        <dbReference type="ChEBI" id="CHEBI:29108"/>
        <label>2</label>
    </ligand>
</feature>
<feature type="binding site" evidence="3">
    <location>
        <position position="137"/>
    </location>
    <ligand>
        <name>Ca(2+)</name>
        <dbReference type="ChEBI" id="CHEBI:29108"/>
        <label>2</label>
    </ligand>
</feature>
<feature type="binding site" evidence="3">
    <location>
        <position position="141"/>
    </location>
    <ligand>
        <name>Ca(2+)</name>
        <dbReference type="ChEBI" id="CHEBI:29108"/>
        <label>2</label>
    </ligand>
</feature>
<feature type="binding site" evidence="3">
    <location>
        <position position="151"/>
    </location>
    <ligand>
        <name>Ca(2+)</name>
        <dbReference type="ChEBI" id="CHEBI:29108"/>
        <label>3</label>
    </ligand>
</feature>
<feature type="binding site" evidence="3">
    <location>
        <position position="162"/>
    </location>
    <ligand>
        <name>Ca(2+)</name>
        <dbReference type="ChEBI" id="CHEBI:29108"/>
        <label>1</label>
    </ligand>
</feature>
<feature type="binding site" evidence="3">
    <location>
        <position position="165"/>
    </location>
    <ligand>
        <name>Ca(2+)</name>
        <dbReference type="ChEBI" id="CHEBI:29108"/>
        <label>1</label>
    </ligand>
</feature>
<feature type="binding site" evidence="3">
    <location>
        <position position="166"/>
    </location>
    <ligand>
        <name>Ca(2+)</name>
        <dbReference type="ChEBI" id="CHEBI:29108"/>
        <label>3</label>
    </ligand>
</feature>
<feature type="binding site" evidence="3">
    <location>
        <position position="167"/>
    </location>
    <ligand>
        <name>Ca(2+)</name>
        <dbReference type="ChEBI" id="CHEBI:29108"/>
        <label>3</label>
    </ligand>
</feature>
<feature type="binding site" evidence="3">
    <location>
        <position position="170"/>
    </location>
    <ligand>
        <name>Ca(2+)</name>
        <dbReference type="ChEBI" id="CHEBI:29108"/>
        <label>3</label>
    </ligand>
</feature>
<feature type="binding site" evidence="3">
    <location>
        <position position="172"/>
    </location>
    <ligand>
        <name>Ca(2+)</name>
        <dbReference type="ChEBI" id="CHEBI:29108"/>
        <label>1</label>
    </ligand>
</feature>
<feature type="binding site" evidence="3">
    <location>
        <position position="172"/>
    </location>
    <ligand>
        <name>Ca(2+)</name>
        <dbReference type="ChEBI" id="CHEBI:29108"/>
        <label>3</label>
    </ligand>
</feature>
<feature type="binding site" evidence="3">
    <location>
        <begin position="201"/>
        <end position="206"/>
    </location>
    <ligand>
        <name>substrate</name>
    </ligand>
</feature>
<feature type="binding site" evidence="3">
    <location>
        <position position="207"/>
    </location>
    <ligand>
        <name>Ca(2+)</name>
        <dbReference type="ChEBI" id="CHEBI:29108"/>
        <label>1</label>
    </ligand>
</feature>
<feature type="binding site" evidence="2">
    <location>
        <position position="230"/>
    </location>
    <ligand>
        <name>substrate</name>
    </ligand>
</feature>
<feature type="binding site" evidence="3">
    <location>
        <position position="232"/>
    </location>
    <ligand>
        <name>substrate</name>
    </ligand>
</feature>
<feature type="binding site" evidence="2">
    <location>
        <position position="250"/>
    </location>
    <ligand>
        <name>substrate</name>
    </ligand>
</feature>
<feature type="binding site" evidence="2">
    <location>
        <position position="257"/>
    </location>
    <ligand>
        <name>substrate</name>
    </ligand>
</feature>
<feature type="binding site" evidence="2">
    <location>
        <position position="293"/>
    </location>
    <ligand>
        <name>substrate</name>
    </ligand>
</feature>
<feature type="binding site" evidence="3">
    <location>
        <begin position="299"/>
        <end position="301"/>
    </location>
    <ligand>
        <name>substrate</name>
    </ligand>
</feature>
<feature type="binding site" evidence="2">
    <location>
        <position position="312"/>
    </location>
    <ligand>
        <name>substrate</name>
    </ligand>
</feature>
<feature type="binding site" evidence="2">
    <location>
        <position position="318"/>
    </location>
    <ligand>
        <name>substrate</name>
    </ligand>
</feature>
<feature type="site" description="Transition state stabilizer" evidence="2">
    <location>
        <position position="313"/>
    </location>
</feature>
<feature type="non-terminal residue">
    <location>
        <position position="368"/>
    </location>
</feature>
<organism>
    <name type="scientific">Hordeum vulgare</name>
    <name type="common">Barley</name>
    <dbReference type="NCBI Taxonomy" id="4513"/>
    <lineage>
        <taxon>Eukaryota</taxon>
        <taxon>Viridiplantae</taxon>
        <taxon>Streptophyta</taxon>
        <taxon>Embryophyta</taxon>
        <taxon>Tracheophyta</taxon>
        <taxon>Spermatophyta</taxon>
        <taxon>Magnoliopsida</taxon>
        <taxon>Liliopsida</taxon>
        <taxon>Poales</taxon>
        <taxon>Poaceae</taxon>
        <taxon>BOP clade</taxon>
        <taxon>Pooideae</taxon>
        <taxon>Triticodae</taxon>
        <taxon>Triticeae</taxon>
        <taxon>Hordeinae</taxon>
        <taxon>Hordeum</taxon>
    </lineage>
</organism>
<accession>P04747</accession>
<reference key="1">
    <citation type="journal article" date="1984" name="Plant Mol. Biol.">
        <title>The effects of gibberellic acid and abscisic acid on alpha-amylase mRNA levels in barley aleurone layers studies using an alpha amylase cDNA clone.</title>
        <authorList>
            <person name="Chandler P.M."/>
            <person name="Zwar J.A."/>
            <person name="Jacobsen J.V."/>
            <person name="Higgins T.J.V."/>
            <person name="Inglis A.S."/>
        </authorList>
        <dbReference type="AGRICOLA" id="IND85038090"/>
    </citation>
    <scope>NUCLEOTIDE SEQUENCE [MRNA]</scope>
</reference>
<keyword id="KW-0106">Calcium</keyword>
<keyword id="KW-0119">Carbohydrate metabolism</keyword>
<keyword id="KW-0309">Germination</keyword>
<keyword id="KW-0326">Glycosidase</keyword>
<keyword id="KW-0378">Hydrolase</keyword>
<keyword id="KW-0479">Metal-binding</keyword>
<keyword id="KW-0732">Signal</keyword>
<comment type="catalytic activity">
    <reaction evidence="2">
        <text>Endohydrolysis of (1-&gt;4)-alpha-D-glucosidic linkages in polysaccharides containing three or more (1-&gt;4)-alpha-linked D-glucose units.</text>
        <dbReference type="EC" id="3.2.1.1"/>
    </reaction>
</comment>
<comment type="cofactor">
    <cofactor evidence="2">
        <name>Ca(2+)</name>
        <dbReference type="ChEBI" id="CHEBI:29108"/>
    </cofactor>
    <text evidence="2">Binds 3 Ca(2+) ions per subunit.</text>
</comment>
<comment type="subunit">
    <text evidence="1">Monomer.</text>
</comment>
<comment type="developmental stage">
    <text>Production of alpha-amylase is hormonally regulated. Germinating embryos produce the hormone gibberellic acid, which within 10 hours stimulates the aleurone cells covering the endosperm of the seed to produce alpha-amylase. The enzyme then degrades the starch within the endosperm for use by the developing plant embryo.</text>
</comment>
<comment type="miscellaneous">
    <text>There are at least 4 types of alpha-amylase in barley.</text>
</comment>
<comment type="miscellaneous">
    <text>Type B isozyme mRNA is undetectable in unstimulated cells and increases a hundred-fold after stimulation with gibberellic acid.</text>
</comment>
<comment type="miscellaneous">
    <text evidence="1">Binds starch not only at the active site, but also via accessory binding sites on the protein surface that are important for efficient binding to starch granules and thereby increase enzyme activity.</text>
</comment>
<comment type="similarity">
    <text evidence="4">Belongs to the glycosyl hydrolase 13 family.</text>
</comment>
<sequence length="368" mass="40787">MANKHLSLSLFLVLLGLSASLASGQVLFQGFNWESWKHNGGWYNFLMGKVDDIAAAGITHVWLPPASQSVAEQGYMPGRLYDLDASKYGNKAQLKSLIGALHGKGVKAIADIVINHRTAEHKDGRGIYCIFEGVTPDARLDWGPHMICRDDRPYADGTGNPDTGADFGAAPDIDHLNLRVQKELAEWLNWLKADIGFDGWRFDFAKGYSADVAKIYIDRSEPSFAVAEIWTSLAYGGDGKPNLNQDQHRQELVNWVDKVGGKGPATTFDFTTKGILNVAVEGELWRLRGTDGKAPGMIGWWPAKAVTFVDNHDTGSTQHMWPFPSDRVMQGYAYILTHPGTPCIFYDHFFDWGLKEEIDRLVSVRTGA</sequence>